<name>SYS_CLOK5</name>
<feature type="chain" id="PRO_1000077192" description="Serine--tRNA ligase">
    <location>
        <begin position="1"/>
        <end position="426"/>
    </location>
</feature>
<feature type="binding site" evidence="1">
    <location>
        <begin position="233"/>
        <end position="235"/>
    </location>
    <ligand>
        <name>L-serine</name>
        <dbReference type="ChEBI" id="CHEBI:33384"/>
    </ligand>
</feature>
<feature type="binding site" evidence="1">
    <location>
        <begin position="264"/>
        <end position="266"/>
    </location>
    <ligand>
        <name>ATP</name>
        <dbReference type="ChEBI" id="CHEBI:30616"/>
    </ligand>
</feature>
<feature type="binding site" evidence="1">
    <location>
        <position position="287"/>
    </location>
    <ligand>
        <name>L-serine</name>
        <dbReference type="ChEBI" id="CHEBI:33384"/>
    </ligand>
</feature>
<feature type="binding site" evidence="1">
    <location>
        <begin position="351"/>
        <end position="354"/>
    </location>
    <ligand>
        <name>ATP</name>
        <dbReference type="ChEBI" id="CHEBI:30616"/>
    </ligand>
</feature>
<feature type="binding site" evidence="1">
    <location>
        <position position="387"/>
    </location>
    <ligand>
        <name>L-serine</name>
        <dbReference type="ChEBI" id="CHEBI:33384"/>
    </ligand>
</feature>
<organism>
    <name type="scientific">Clostridium kluyveri (strain ATCC 8527 / DSM 555 / NBRC 12016 / NCIMB 10680 / K1)</name>
    <dbReference type="NCBI Taxonomy" id="431943"/>
    <lineage>
        <taxon>Bacteria</taxon>
        <taxon>Bacillati</taxon>
        <taxon>Bacillota</taxon>
        <taxon>Clostridia</taxon>
        <taxon>Eubacteriales</taxon>
        <taxon>Clostridiaceae</taxon>
        <taxon>Clostridium</taxon>
    </lineage>
</organism>
<comment type="function">
    <text evidence="1">Catalyzes the attachment of serine to tRNA(Ser). Is also able to aminoacylate tRNA(Sec) with serine, to form the misacylated tRNA L-seryl-tRNA(Sec), which will be further converted into selenocysteinyl-tRNA(Sec).</text>
</comment>
<comment type="catalytic activity">
    <reaction evidence="1">
        <text>tRNA(Ser) + L-serine + ATP = L-seryl-tRNA(Ser) + AMP + diphosphate + H(+)</text>
        <dbReference type="Rhea" id="RHEA:12292"/>
        <dbReference type="Rhea" id="RHEA-COMP:9669"/>
        <dbReference type="Rhea" id="RHEA-COMP:9703"/>
        <dbReference type="ChEBI" id="CHEBI:15378"/>
        <dbReference type="ChEBI" id="CHEBI:30616"/>
        <dbReference type="ChEBI" id="CHEBI:33019"/>
        <dbReference type="ChEBI" id="CHEBI:33384"/>
        <dbReference type="ChEBI" id="CHEBI:78442"/>
        <dbReference type="ChEBI" id="CHEBI:78533"/>
        <dbReference type="ChEBI" id="CHEBI:456215"/>
        <dbReference type="EC" id="6.1.1.11"/>
    </reaction>
</comment>
<comment type="catalytic activity">
    <reaction evidence="1">
        <text>tRNA(Sec) + L-serine + ATP = L-seryl-tRNA(Sec) + AMP + diphosphate + H(+)</text>
        <dbReference type="Rhea" id="RHEA:42580"/>
        <dbReference type="Rhea" id="RHEA-COMP:9742"/>
        <dbReference type="Rhea" id="RHEA-COMP:10128"/>
        <dbReference type="ChEBI" id="CHEBI:15378"/>
        <dbReference type="ChEBI" id="CHEBI:30616"/>
        <dbReference type="ChEBI" id="CHEBI:33019"/>
        <dbReference type="ChEBI" id="CHEBI:33384"/>
        <dbReference type="ChEBI" id="CHEBI:78442"/>
        <dbReference type="ChEBI" id="CHEBI:78533"/>
        <dbReference type="ChEBI" id="CHEBI:456215"/>
        <dbReference type="EC" id="6.1.1.11"/>
    </reaction>
</comment>
<comment type="pathway">
    <text evidence="1">Aminoacyl-tRNA biosynthesis; selenocysteinyl-tRNA(Sec) biosynthesis; L-seryl-tRNA(Sec) from L-serine and tRNA(Sec): step 1/1.</text>
</comment>
<comment type="subunit">
    <text evidence="1">Homodimer. The tRNA molecule binds across the dimer.</text>
</comment>
<comment type="subcellular location">
    <subcellularLocation>
        <location evidence="1">Cytoplasm</location>
    </subcellularLocation>
</comment>
<comment type="domain">
    <text evidence="1">Consists of two distinct domains, a catalytic core and a N-terminal extension that is involved in tRNA binding.</text>
</comment>
<comment type="similarity">
    <text evidence="1">Belongs to the class-II aminoacyl-tRNA synthetase family. Type-1 seryl-tRNA synthetase subfamily.</text>
</comment>
<reference key="1">
    <citation type="journal article" date="2008" name="Proc. Natl. Acad. Sci. U.S.A.">
        <title>The genome of Clostridium kluyveri, a strict anaerobe with unique metabolic features.</title>
        <authorList>
            <person name="Seedorf H."/>
            <person name="Fricke W.F."/>
            <person name="Veith B."/>
            <person name="Brueggemann H."/>
            <person name="Liesegang H."/>
            <person name="Strittmatter A."/>
            <person name="Miethke M."/>
            <person name="Buckel W."/>
            <person name="Hinderberger J."/>
            <person name="Li F."/>
            <person name="Hagemeier C."/>
            <person name="Thauer R.K."/>
            <person name="Gottschalk G."/>
        </authorList>
    </citation>
    <scope>NUCLEOTIDE SEQUENCE [LARGE SCALE GENOMIC DNA]</scope>
    <source>
        <strain>ATCC 8527 / DSM 555 / NBRC 12016 / NCIMB 10680 / K1</strain>
    </source>
</reference>
<dbReference type="EC" id="6.1.1.11" evidence="1"/>
<dbReference type="EMBL" id="CP000673">
    <property type="protein sequence ID" value="EDK32100.1"/>
    <property type="molecule type" value="Genomic_DNA"/>
</dbReference>
<dbReference type="RefSeq" id="WP_011988626.1">
    <property type="nucleotide sequence ID" value="NC_009706.1"/>
</dbReference>
<dbReference type="SMR" id="A5N469"/>
<dbReference type="STRING" id="431943.CKL_0018"/>
<dbReference type="KEGG" id="ckl:CKL_0018"/>
<dbReference type="eggNOG" id="COG0172">
    <property type="taxonomic scope" value="Bacteria"/>
</dbReference>
<dbReference type="HOGENOM" id="CLU_023797_0_1_9"/>
<dbReference type="UniPathway" id="UPA00906">
    <property type="reaction ID" value="UER00895"/>
</dbReference>
<dbReference type="Proteomes" id="UP000002411">
    <property type="component" value="Chromosome"/>
</dbReference>
<dbReference type="GO" id="GO:0005737">
    <property type="term" value="C:cytoplasm"/>
    <property type="evidence" value="ECO:0007669"/>
    <property type="project" value="UniProtKB-SubCell"/>
</dbReference>
<dbReference type="GO" id="GO:0005524">
    <property type="term" value="F:ATP binding"/>
    <property type="evidence" value="ECO:0007669"/>
    <property type="project" value="UniProtKB-UniRule"/>
</dbReference>
<dbReference type="GO" id="GO:0140096">
    <property type="term" value="F:catalytic activity, acting on a protein"/>
    <property type="evidence" value="ECO:0007669"/>
    <property type="project" value="UniProtKB-ARBA"/>
</dbReference>
<dbReference type="GO" id="GO:0004828">
    <property type="term" value="F:serine-tRNA ligase activity"/>
    <property type="evidence" value="ECO:0007669"/>
    <property type="project" value="UniProtKB-UniRule"/>
</dbReference>
<dbReference type="GO" id="GO:0016740">
    <property type="term" value="F:transferase activity"/>
    <property type="evidence" value="ECO:0007669"/>
    <property type="project" value="UniProtKB-ARBA"/>
</dbReference>
<dbReference type="GO" id="GO:0016260">
    <property type="term" value="P:selenocysteine biosynthetic process"/>
    <property type="evidence" value="ECO:0007669"/>
    <property type="project" value="UniProtKB-UniRule"/>
</dbReference>
<dbReference type="GO" id="GO:0006434">
    <property type="term" value="P:seryl-tRNA aminoacylation"/>
    <property type="evidence" value="ECO:0007669"/>
    <property type="project" value="UniProtKB-UniRule"/>
</dbReference>
<dbReference type="CDD" id="cd00770">
    <property type="entry name" value="SerRS_core"/>
    <property type="match status" value="1"/>
</dbReference>
<dbReference type="Gene3D" id="3.30.930.10">
    <property type="entry name" value="Bira Bifunctional Protein, Domain 2"/>
    <property type="match status" value="1"/>
</dbReference>
<dbReference type="Gene3D" id="1.10.287.40">
    <property type="entry name" value="Serine-tRNA synthetase, tRNA binding domain"/>
    <property type="match status" value="1"/>
</dbReference>
<dbReference type="HAMAP" id="MF_00176">
    <property type="entry name" value="Ser_tRNA_synth_type1"/>
    <property type="match status" value="1"/>
</dbReference>
<dbReference type="InterPro" id="IPR002314">
    <property type="entry name" value="aa-tRNA-synt_IIb"/>
</dbReference>
<dbReference type="InterPro" id="IPR006195">
    <property type="entry name" value="aa-tRNA-synth_II"/>
</dbReference>
<dbReference type="InterPro" id="IPR045864">
    <property type="entry name" value="aa-tRNA-synth_II/BPL/LPL"/>
</dbReference>
<dbReference type="InterPro" id="IPR002317">
    <property type="entry name" value="Ser-tRNA-ligase_type_1"/>
</dbReference>
<dbReference type="InterPro" id="IPR015866">
    <property type="entry name" value="Ser-tRNA-synth_1_N"/>
</dbReference>
<dbReference type="InterPro" id="IPR042103">
    <property type="entry name" value="SerRS_1_N_sf"/>
</dbReference>
<dbReference type="InterPro" id="IPR033729">
    <property type="entry name" value="SerRS_core"/>
</dbReference>
<dbReference type="InterPro" id="IPR010978">
    <property type="entry name" value="tRNA-bd_arm"/>
</dbReference>
<dbReference type="NCBIfam" id="TIGR00414">
    <property type="entry name" value="serS"/>
    <property type="match status" value="1"/>
</dbReference>
<dbReference type="PANTHER" id="PTHR43697:SF1">
    <property type="entry name" value="SERINE--TRNA LIGASE"/>
    <property type="match status" value="1"/>
</dbReference>
<dbReference type="PANTHER" id="PTHR43697">
    <property type="entry name" value="SERYL-TRNA SYNTHETASE"/>
    <property type="match status" value="1"/>
</dbReference>
<dbReference type="Pfam" id="PF02403">
    <property type="entry name" value="Seryl_tRNA_N"/>
    <property type="match status" value="1"/>
</dbReference>
<dbReference type="Pfam" id="PF00587">
    <property type="entry name" value="tRNA-synt_2b"/>
    <property type="match status" value="1"/>
</dbReference>
<dbReference type="PIRSF" id="PIRSF001529">
    <property type="entry name" value="Ser-tRNA-synth_IIa"/>
    <property type="match status" value="1"/>
</dbReference>
<dbReference type="PRINTS" id="PR00981">
    <property type="entry name" value="TRNASYNTHSER"/>
</dbReference>
<dbReference type="SUPFAM" id="SSF55681">
    <property type="entry name" value="Class II aaRS and biotin synthetases"/>
    <property type="match status" value="1"/>
</dbReference>
<dbReference type="SUPFAM" id="SSF46589">
    <property type="entry name" value="tRNA-binding arm"/>
    <property type="match status" value="1"/>
</dbReference>
<dbReference type="PROSITE" id="PS50862">
    <property type="entry name" value="AA_TRNA_LIGASE_II"/>
    <property type="match status" value="1"/>
</dbReference>
<accession>A5N469</accession>
<protein>
    <recommendedName>
        <fullName evidence="1">Serine--tRNA ligase</fullName>
        <ecNumber evidence="1">6.1.1.11</ecNumber>
    </recommendedName>
    <alternativeName>
        <fullName evidence="1">Seryl-tRNA synthetase</fullName>
        <shortName evidence="1">SerRS</shortName>
    </alternativeName>
    <alternativeName>
        <fullName evidence="1">Seryl-tRNA(Ser/Sec) synthetase</fullName>
    </alternativeName>
</protein>
<keyword id="KW-0030">Aminoacyl-tRNA synthetase</keyword>
<keyword id="KW-0067">ATP-binding</keyword>
<keyword id="KW-0963">Cytoplasm</keyword>
<keyword id="KW-0436">Ligase</keyword>
<keyword id="KW-0547">Nucleotide-binding</keyword>
<keyword id="KW-0648">Protein biosynthesis</keyword>
<keyword id="KW-1185">Reference proteome</keyword>
<proteinExistence type="inferred from homology"/>
<evidence type="ECO:0000255" key="1">
    <source>
        <dbReference type="HAMAP-Rule" id="MF_00176"/>
    </source>
</evidence>
<sequence>MLDLKRIRNNPEEIKKQLLNRGEDFELSIIDKVVSLDEKRRKILVEVEALKNKRNQDSGEIAKIKRAGGNADTLVVEMKQVSDNIKQYDIQLSEINDKIEYIMLRIPNIPNPAVPEGKLDEDNVEIRRWMEPTKFKFQPKAHWDIGTNLNILDFERGGKVAGSRFTFYRGLGARLERAIVSYYLDFHTEKHGYEEILPPYMVNRTSMIGTGQLPKFEEDAFRVANNDFFLIPTAEVPVTNFYRNEVLKGEDLPIKYVAYSACFRAEAGSAGRDTRGIIRQHQFNKVELVKFAKPEQSYDELEKLTNDAEDVIKGLKIPYRVVKICKGDLGFTAALKYDIEVWMPSYNRYVEISSCSNFEDFQARRVNIKYKETPKDKPKYIHTLNGSGVAIGRTVAAILENYQQDDGSVLIPEILKPYMGGREVIK</sequence>
<gene>
    <name evidence="1" type="primary">serS</name>
    <name type="ordered locus">CKL_0018</name>
</gene>